<comment type="function">
    <text evidence="1">Transfers and isomerizes the ribose moiety from AdoMet to the 7-aminomethyl group of 7-deazaguanine (preQ1-tRNA) to give epoxyqueuosine (oQ-tRNA).</text>
</comment>
<comment type="catalytic activity">
    <reaction evidence="1">
        <text>7-aminomethyl-7-carbaguanosine(34) in tRNA + S-adenosyl-L-methionine = epoxyqueuosine(34) in tRNA + adenine + L-methionine + 2 H(+)</text>
        <dbReference type="Rhea" id="RHEA:32155"/>
        <dbReference type="Rhea" id="RHEA-COMP:10342"/>
        <dbReference type="Rhea" id="RHEA-COMP:18582"/>
        <dbReference type="ChEBI" id="CHEBI:15378"/>
        <dbReference type="ChEBI" id="CHEBI:16708"/>
        <dbReference type="ChEBI" id="CHEBI:57844"/>
        <dbReference type="ChEBI" id="CHEBI:59789"/>
        <dbReference type="ChEBI" id="CHEBI:82833"/>
        <dbReference type="ChEBI" id="CHEBI:194443"/>
        <dbReference type="EC" id="2.4.99.17"/>
    </reaction>
</comment>
<comment type="pathway">
    <text evidence="1">tRNA modification; tRNA-queuosine biosynthesis.</text>
</comment>
<comment type="subunit">
    <text evidence="1">Monomer.</text>
</comment>
<comment type="subcellular location">
    <subcellularLocation>
        <location evidence="1">Cytoplasm</location>
    </subcellularLocation>
</comment>
<comment type="similarity">
    <text evidence="1">Belongs to the QueA family.</text>
</comment>
<keyword id="KW-0963">Cytoplasm</keyword>
<keyword id="KW-0671">Queuosine biosynthesis</keyword>
<keyword id="KW-0949">S-adenosyl-L-methionine</keyword>
<keyword id="KW-0808">Transferase</keyword>
<feature type="chain" id="PRO_0000231310" description="S-adenosylmethionine:tRNA ribosyltransferase-isomerase">
    <location>
        <begin position="1"/>
        <end position="344"/>
    </location>
</feature>
<accession>Q6FEJ3</accession>
<dbReference type="EC" id="2.4.99.17" evidence="1"/>
<dbReference type="EMBL" id="CR543861">
    <property type="protein sequence ID" value="CAG67515.1"/>
    <property type="molecule type" value="Genomic_DNA"/>
</dbReference>
<dbReference type="RefSeq" id="WP_004919916.1">
    <property type="nucleotide sequence ID" value="NC_005966.1"/>
</dbReference>
<dbReference type="SMR" id="Q6FEJ3"/>
<dbReference type="STRING" id="202950.GCA_001485005_00827"/>
<dbReference type="GeneID" id="45233068"/>
<dbReference type="KEGG" id="aci:ACIAD0591"/>
<dbReference type="eggNOG" id="COG0809">
    <property type="taxonomic scope" value="Bacteria"/>
</dbReference>
<dbReference type="HOGENOM" id="CLU_039110_1_0_6"/>
<dbReference type="OrthoDB" id="9805933at2"/>
<dbReference type="BioCyc" id="ASP62977:ACIAD_RS02700-MONOMER"/>
<dbReference type="UniPathway" id="UPA00392"/>
<dbReference type="Proteomes" id="UP000000430">
    <property type="component" value="Chromosome"/>
</dbReference>
<dbReference type="GO" id="GO:0005737">
    <property type="term" value="C:cytoplasm"/>
    <property type="evidence" value="ECO:0007669"/>
    <property type="project" value="UniProtKB-SubCell"/>
</dbReference>
<dbReference type="GO" id="GO:0051075">
    <property type="term" value="F:S-adenosylmethionine:tRNA ribosyltransferase-isomerase activity"/>
    <property type="evidence" value="ECO:0007669"/>
    <property type="project" value="UniProtKB-EC"/>
</dbReference>
<dbReference type="GO" id="GO:0008616">
    <property type="term" value="P:queuosine biosynthetic process"/>
    <property type="evidence" value="ECO:0007669"/>
    <property type="project" value="UniProtKB-UniRule"/>
</dbReference>
<dbReference type="GO" id="GO:0002099">
    <property type="term" value="P:tRNA wobble guanine modification"/>
    <property type="evidence" value="ECO:0007669"/>
    <property type="project" value="TreeGrafter"/>
</dbReference>
<dbReference type="FunFam" id="3.40.1780.10:FF:000001">
    <property type="entry name" value="S-adenosylmethionine:tRNA ribosyltransferase-isomerase"/>
    <property type="match status" value="1"/>
</dbReference>
<dbReference type="Gene3D" id="2.40.10.240">
    <property type="entry name" value="QueA-like"/>
    <property type="match status" value="1"/>
</dbReference>
<dbReference type="Gene3D" id="3.40.1780.10">
    <property type="entry name" value="QueA-like"/>
    <property type="match status" value="1"/>
</dbReference>
<dbReference type="HAMAP" id="MF_00113">
    <property type="entry name" value="QueA"/>
    <property type="match status" value="1"/>
</dbReference>
<dbReference type="InterPro" id="IPR003699">
    <property type="entry name" value="QueA"/>
</dbReference>
<dbReference type="InterPro" id="IPR042118">
    <property type="entry name" value="QueA_dom1"/>
</dbReference>
<dbReference type="InterPro" id="IPR042119">
    <property type="entry name" value="QueA_dom2"/>
</dbReference>
<dbReference type="InterPro" id="IPR036100">
    <property type="entry name" value="QueA_sf"/>
</dbReference>
<dbReference type="NCBIfam" id="NF001140">
    <property type="entry name" value="PRK00147.1"/>
    <property type="match status" value="1"/>
</dbReference>
<dbReference type="NCBIfam" id="TIGR00113">
    <property type="entry name" value="queA"/>
    <property type="match status" value="1"/>
</dbReference>
<dbReference type="PANTHER" id="PTHR30307">
    <property type="entry name" value="S-ADENOSYLMETHIONINE:TRNA RIBOSYLTRANSFERASE-ISOMERASE"/>
    <property type="match status" value="1"/>
</dbReference>
<dbReference type="PANTHER" id="PTHR30307:SF0">
    <property type="entry name" value="S-ADENOSYLMETHIONINE:TRNA RIBOSYLTRANSFERASE-ISOMERASE"/>
    <property type="match status" value="1"/>
</dbReference>
<dbReference type="Pfam" id="PF02547">
    <property type="entry name" value="Queuosine_synth"/>
    <property type="match status" value="1"/>
</dbReference>
<dbReference type="SUPFAM" id="SSF111337">
    <property type="entry name" value="QueA-like"/>
    <property type="match status" value="1"/>
</dbReference>
<name>QUEA_ACIAD</name>
<evidence type="ECO:0000255" key="1">
    <source>
        <dbReference type="HAMAP-Rule" id="MF_00113"/>
    </source>
</evidence>
<organism>
    <name type="scientific">Acinetobacter baylyi (strain ATCC 33305 / BD413 / ADP1)</name>
    <dbReference type="NCBI Taxonomy" id="62977"/>
    <lineage>
        <taxon>Bacteria</taxon>
        <taxon>Pseudomonadati</taxon>
        <taxon>Pseudomonadota</taxon>
        <taxon>Gammaproteobacteria</taxon>
        <taxon>Moraxellales</taxon>
        <taxon>Moraxellaceae</taxon>
        <taxon>Acinetobacter</taxon>
    </lineage>
</organism>
<proteinExistence type="inferred from homology"/>
<protein>
    <recommendedName>
        <fullName evidence="1">S-adenosylmethionine:tRNA ribosyltransferase-isomerase</fullName>
        <ecNumber evidence="1">2.4.99.17</ecNumber>
    </recommendedName>
    <alternativeName>
        <fullName evidence="1">Queuosine biosynthesis protein QueA</fullName>
    </alternativeName>
</protein>
<sequence>MQLSDFNFDLPDELIARYPLDTRSASRLLHLDAHGHYHDHAFTDILDLINDGDLLVLNDTKVMKARLKGKRASGGAIEILVERMLDNQIAHCHIKASNTPKAGAELFVGENGIKVTVQGRHENLFVVEFSEPILSVLDRYGQLPIPPYFNREAEEIDTERYQTVFHDPQKIASVAAPTASLHFDQDLLEKLAAKNIQKTFVTLHVGAGTFMPVRTDDIKNHIMHSEWCDVPESTAELIRQTKARGNKVIAVGTTATRALESAAQANGGKIDAWTGDTQIFIYPGYQFCVVDRLITNFHLPESTLLMLVSALSNRNNILSAYEHAVQSKYRFFSYGDAMLIDQAV</sequence>
<reference key="1">
    <citation type="journal article" date="2004" name="Nucleic Acids Res.">
        <title>Unique features revealed by the genome sequence of Acinetobacter sp. ADP1, a versatile and naturally transformation competent bacterium.</title>
        <authorList>
            <person name="Barbe V."/>
            <person name="Vallenet D."/>
            <person name="Fonknechten N."/>
            <person name="Kreimeyer A."/>
            <person name="Oztas S."/>
            <person name="Labarre L."/>
            <person name="Cruveiller S."/>
            <person name="Robert C."/>
            <person name="Duprat S."/>
            <person name="Wincker P."/>
            <person name="Ornston L.N."/>
            <person name="Weissenbach J."/>
            <person name="Marliere P."/>
            <person name="Cohen G.N."/>
            <person name="Medigue C."/>
        </authorList>
    </citation>
    <scope>NUCLEOTIDE SEQUENCE [LARGE SCALE GENOMIC DNA]</scope>
    <source>
        <strain>ATCC 33305 / BD413 / ADP1</strain>
    </source>
</reference>
<gene>
    <name evidence="1" type="primary">queA</name>
    <name type="ordered locus">ACIAD0591</name>
</gene>